<gene>
    <name type="ordered locus">DVU_2680</name>
</gene>
<proteinExistence type="evidence at protein level"/>
<keyword id="KW-0002">3D-structure</keyword>
<keyword id="KW-0903">Direct protein sequencing</keyword>
<keyword id="KW-0249">Electron transport</keyword>
<keyword id="KW-0285">Flavoprotein</keyword>
<keyword id="KW-0288">FMN</keyword>
<keyword id="KW-1185">Reference proteome</keyword>
<keyword id="KW-0813">Transport</keyword>
<sequence length="148" mass="15823">MPKALIVYGSTTGNTEYTAETIARELADAGYEVDSRDAASVEAGGLFEGFDLVLLGCSTWGDDSIELQDDFIPLFDSLEETGAQGRKVACFGCGDSSYEYFCGAVDAIEEKLKNLGAEIVQDGLRIDGDPRAARDDIVGWAHDVRGAI</sequence>
<name>FLAV_NITV2</name>
<organism>
    <name type="scientific">Nitratidesulfovibrio vulgaris (strain ATCC 29579 / DSM 644 / CCUG 34227 / NCIMB 8303 / VKM B-1760 / Hildenborough)</name>
    <name type="common">Desulfovibrio vulgaris</name>
    <dbReference type="NCBI Taxonomy" id="882"/>
    <lineage>
        <taxon>Bacteria</taxon>
        <taxon>Pseudomonadati</taxon>
        <taxon>Thermodesulfobacteriota</taxon>
        <taxon>Desulfovibrionia</taxon>
        <taxon>Desulfovibrionales</taxon>
        <taxon>Desulfovibrionaceae</taxon>
        <taxon>Nitratidesulfovibrio</taxon>
    </lineage>
</organism>
<evidence type="ECO:0000255" key="1">
    <source>
        <dbReference type="PROSITE-ProRule" id="PRU00088"/>
    </source>
</evidence>
<evidence type="ECO:0000305" key="2"/>
<evidence type="ECO:0007829" key="3">
    <source>
        <dbReference type="PDB" id="5YOB"/>
    </source>
</evidence>
<accession>P00323</accession>
<dbReference type="EMBL" id="J04033">
    <property type="protein sequence ID" value="AAA23367.1"/>
    <property type="molecule type" value="Genomic_DNA"/>
</dbReference>
<dbReference type="EMBL" id="AE017285">
    <property type="protein sequence ID" value="AAS97152.1"/>
    <property type="molecule type" value="Genomic_DNA"/>
</dbReference>
<dbReference type="PIR" id="A31991">
    <property type="entry name" value="FXDV"/>
</dbReference>
<dbReference type="RefSeq" id="WP_010939949.1">
    <property type="nucleotide sequence ID" value="NC_002937.3"/>
</dbReference>
<dbReference type="RefSeq" id="YP_011892.1">
    <property type="nucleotide sequence ID" value="NC_002937.3"/>
</dbReference>
<dbReference type="PDB" id="1AKQ">
    <property type="method" value="X-ray"/>
    <property type="resolution" value="1.90 A"/>
    <property type="chains" value="A=2-148"/>
</dbReference>
<dbReference type="PDB" id="1AKR">
    <property type="method" value="X-ray"/>
    <property type="resolution" value="1.58 A"/>
    <property type="chains" value="A=2-148"/>
</dbReference>
<dbReference type="PDB" id="1AKT">
    <property type="method" value="X-ray"/>
    <property type="resolution" value="1.80 A"/>
    <property type="chains" value="A=2-148"/>
</dbReference>
<dbReference type="PDB" id="1AKU">
    <property type="method" value="X-ray"/>
    <property type="resolution" value="1.90 A"/>
    <property type="chains" value="A=2-148"/>
</dbReference>
<dbReference type="PDB" id="1AKV">
    <property type="method" value="X-ray"/>
    <property type="resolution" value="2.00 A"/>
    <property type="chains" value="A=2-148"/>
</dbReference>
<dbReference type="PDB" id="1AKW">
    <property type="method" value="X-ray"/>
    <property type="resolution" value="1.75 A"/>
    <property type="chains" value="A=2-148"/>
</dbReference>
<dbReference type="PDB" id="1AZL">
    <property type="method" value="X-ray"/>
    <property type="resolution" value="1.80 A"/>
    <property type="chains" value="A=2-148"/>
</dbReference>
<dbReference type="PDB" id="1BU5">
    <property type="method" value="X-ray"/>
    <property type="resolution" value="1.83 A"/>
    <property type="chains" value="A/B=2-148"/>
</dbReference>
<dbReference type="PDB" id="1C7E">
    <property type="method" value="X-ray"/>
    <property type="resolution" value="2.25 A"/>
    <property type="chains" value="A/B=2-148"/>
</dbReference>
<dbReference type="PDB" id="1C7F">
    <property type="method" value="X-ray"/>
    <property type="resolution" value="2.00 A"/>
    <property type="chains" value="A/B=2-148"/>
</dbReference>
<dbReference type="PDB" id="1F4P">
    <property type="method" value="X-ray"/>
    <property type="resolution" value="1.30 A"/>
    <property type="chains" value="A=2-148"/>
</dbReference>
<dbReference type="PDB" id="1FX1">
    <property type="method" value="X-ray"/>
    <property type="resolution" value="2.00 A"/>
    <property type="chains" value="A=1-148"/>
</dbReference>
<dbReference type="PDB" id="1I1O">
    <property type="method" value="X-ray"/>
    <property type="resolution" value="2.00 A"/>
    <property type="chains" value="A=3-148"/>
</dbReference>
<dbReference type="PDB" id="1J8Q">
    <property type="method" value="X-ray"/>
    <property type="resolution" value="1.35 A"/>
    <property type="chains" value="A=2-148"/>
</dbReference>
<dbReference type="PDB" id="1J9E">
    <property type="method" value="X-ray"/>
    <property type="resolution" value="1.44 A"/>
    <property type="chains" value="A=2-148"/>
</dbReference>
<dbReference type="PDB" id="1J9G">
    <property type="method" value="X-ray"/>
    <property type="resolution" value="2.40 A"/>
    <property type="chains" value="A=2-148"/>
</dbReference>
<dbReference type="PDB" id="1WSB">
    <property type="method" value="X-ray"/>
    <property type="resolution" value="1.80 A"/>
    <property type="chains" value="A=1-148"/>
</dbReference>
<dbReference type="PDB" id="1WSW">
    <property type="method" value="X-ray"/>
    <property type="resolution" value="1.69 A"/>
    <property type="chains" value="A=1-148"/>
</dbReference>
<dbReference type="PDB" id="1XT6">
    <property type="method" value="X-ray"/>
    <property type="resolution" value="1.80 A"/>
    <property type="chains" value="A=3-148"/>
</dbReference>
<dbReference type="PDB" id="1XYV">
    <property type="method" value="X-ray"/>
    <property type="resolution" value="1.79 A"/>
    <property type="chains" value="A=1-148"/>
</dbReference>
<dbReference type="PDB" id="1XYY">
    <property type="method" value="X-ray"/>
    <property type="resolution" value="1.70 A"/>
    <property type="chains" value="A=1-148"/>
</dbReference>
<dbReference type="PDB" id="2FX2">
    <property type="method" value="X-ray"/>
    <property type="resolution" value="1.90 A"/>
    <property type="chains" value="A=3-148"/>
</dbReference>
<dbReference type="PDB" id="3FX2">
    <property type="method" value="X-ray"/>
    <property type="resolution" value="1.90 A"/>
    <property type="chains" value="A=3-148"/>
</dbReference>
<dbReference type="PDB" id="4FX2">
    <property type="method" value="X-ray"/>
    <property type="resolution" value="1.90 A"/>
    <property type="chains" value="A=3-148"/>
</dbReference>
<dbReference type="PDB" id="5FX2">
    <property type="method" value="X-ray"/>
    <property type="resolution" value="1.90 A"/>
    <property type="chains" value="A=3-148"/>
</dbReference>
<dbReference type="PDB" id="5TGZ">
    <property type="method" value="X-ray"/>
    <property type="resolution" value="2.80 A"/>
    <property type="chains" value="A=2-148"/>
</dbReference>
<dbReference type="PDB" id="5V56">
    <property type="method" value="X-ray"/>
    <property type="resolution" value="2.90 A"/>
    <property type="chains" value="A/B=6-148"/>
</dbReference>
<dbReference type="PDB" id="5V57">
    <property type="method" value="X-ray"/>
    <property type="resolution" value="3.00 A"/>
    <property type="chains" value="A/B=6-148"/>
</dbReference>
<dbReference type="PDB" id="5XR8">
    <property type="method" value="X-ray"/>
    <property type="resolution" value="2.95 A"/>
    <property type="chains" value="A=3-148"/>
</dbReference>
<dbReference type="PDB" id="5XRA">
    <property type="method" value="X-ray"/>
    <property type="resolution" value="2.80 A"/>
    <property type="chains" value="A=3-148"/>
</dbReference>
<dbReference type="PDB" id="5YOB">
    <property type="method" value="X-ray"/>
    <property type="resolution" value="1.14 A"/>
    <property type="chains" value="A=3-148"/>
</dbReference>
<dbReference type="PDB" id="5YOC">
    <property type="method" value="X-ray"/>
    <property type="resolution" value="1.50 A"/>
    <property type="chains" value="A=3-148"/>
</dbReference>
<dbReference type="PDB" id="5YOE">
    <property type="method" value="X-ray"/>
    <property type="resolution" value="1.35 A"/>
    <property type="chains" value="A=3-148"/>
</dbReference>
<dbReference type="PDB" id="5YOG">
    <property type="method" value="X-ray"/>
    <property type="resolution" value="1.42 A"/>
    <property type="chains" value="A=3-148"/>
</dbReference>
<dbReference type="PDB" id="6LI0">
    <property type="method" value="X-ray"/>
    <property type="resolution" value="2.20 A"/>
    <property type="chains" value="A=3-148"/>
</dbReference>
<dbReference type="PDB" id="6LI1">
    <property type="method" value="X-ray"/>
    <property type="resolution" value="2.90 A"/>
    <property type="chains" value="A=3-148"/>
</dbReference>
<dbReference type="PDB" id="7DDZ">
    <property type="method" value="X-ray"/>
    <property type="resolution" value="2.80 A"/>
    <property type="chains" value="A=3-148"/>
</dbReference>
<dbReference type="PDB" id="7EPE">
    <property type="method" value="X-ray"/>
    <property type="resolution" value="2.50 A"/>
    <property type="chains" value="A=3-148"/>
</dbReference>
<dbReference type="PDB" id="7EPF">
    <property type="method" value="X-ray"/>
    <property type="resolution" value="2.70 A"/>
    <property type="chains" value="A=3-148"/>
</dbReference>
<dbReference type="PDB" id="7K15">
    <property type="method" value="X-ray"/>
    <property type="resolution" value="2.88 A"/>
    <property type="chains" value="A=2-148"/>
</dbReference>
<dbReference type="PDB" id="7V3Z">
    <property type="method" value="X-ray"/>
    <property type="resolution" value="3.29 A"/>
    <property type="chains" value="A=3-148"/>
</dbReference>
<dbReference type="PDBsum" id="1AKQ"/>
<dbReference type="PDBsum" id="1AKR"/>
<dbReference type="PDBsum" id="1AKT"/>
<dbReference type="PDBsum" id="1AKU"/>
<dbReference type="PDBsum" id="1AKV"/>
<dbReference type="PDBsum" id="1AKW"/>
<dbReference type="PDBsum" id="1AZL"/>
<dbReference type="PDBsum" id="1BU5"/>
<dbReference type="PDBsum" id="1C7E"/>
<dbReference type="PDBsum" id="1C7F"/>
<dbReference type="PDBsum" id="1F4P"/>
<dbReference type="PDBsum" id="1FX1"/>
<dbReference type="PDBsum" id="1I1O"/>
<dbReference type="PDBsum" id="1J8Q"/>
<dbReference type="PDBsum" id="1J9E"/>
<dbReference type="PDBsum" id="1J9G"/>
<dbReference type="PDBsum" id="1WSB"/>
<dbReference type="PDBsum" id="1WSW"/>
<dbReference type="PDBsum" id="1XT6"/>
<dbReference type="PDBsum" id="1XYV"/>
<dbReference type="PDBsum" id="1XYY"/>
<dbReference type="PDBsum" id="2FX2"/>
<dbReference type="PDBsum" id="3FX2"/>
<dbReference type="PDBsum" id="4FX2"/>
<dbReference type="PDBsum" id="5FX2"/>
<dbReference type="PDBsum" id="5TGZ"/>
<dbReference type="PDBsum" id="5V56"/>
<dbReference type="PDBsum" id="5V57"/>
<dbReference type="PDBsum" id="5XR8"/>
<dbReference type="PDBsum" id="5XRA"/>
<dbReference type="PDBsum" id="5YOB"/>
<dbReference type="PDBsum" id="5YOC"/>
<dbReference type="PDBsum" id="5YOE"/>
<dbReference type="PDBsum" id="5YOG"/>
<dbReference type="PDBsum" id="6LI0"/>
<dbReference type="PDBsum" id="6LI1"/>
<dbReference type="PDBsum" id="7DDZ"/>
<dbReference type="PDBsum" id="7EPE"/>
<dbReference type="PDBsum" id="7EPF"/>
<dbReference type="PDBsum" id="7K15"/>
<dbReference type="PDBsum" id="7V3Z"/>
<dbReference type="BMRB" id="P00323"/>
<dbReference type="SMR" id="P00323"/>
<dbReference type="STRING" id="882.DVU_2680"/>
<dbReference type="DrugBank" id="DB03247">
    <property type="generic name" value="Flavin mononucleotide"/>
</dbReference>
<dbReference type="PaxDb" id="882-DVU_2680"/>
<dbReference type="EnsemblBacteria" id="AAS97152">
    <property type="protein sequence ID" value="AAS97152"/>
    <property type="gene ID" value="DVU_2680"/>
</dbReference>
<dbReference type="KEGG" id="dvu:DVU_2680"/>
<dbReference type="PATRIC" id="fig|882.5.peg.2425"/>
<dbReference type="eggNOG" id="COG0716">
    <property type="taxonomic scope" value="Bacteria"/>
</dbReference>
<dbReference type="HOGENOM" id="CLU_051402_4_2_7"/>
<dbReference type="OrthoDB" id="9790745at2"/>
<dbReference type="PhylomeDB" id="P00323"/>
<dbReference type="EvolutionaryTrace" id="P00323"/>
<dbReference type="Proteomes" id="UP000002194">
    <property type="component" value="Chromosome"/>
</dbReference>
<dbReference type="GO" id="GO:0009055">
    <property type="term" value="F:electron transfer activity"/>
    <property type="evidence" value="ECO:0007669"/>
    <property type="project" value="InterPro"/>
</dbReference>
<dbReference type="GO" id="GO:0010181">
    <property type="term" value="F:FMN binding"/>
    <property type="evidence" value="ECO:0007669"/>
    <property type="project" value="InterPro"/>
</dbReference>
<dbReference type="Gene3D" id="3.40.50.360">
    <property type="match status" value="1"/>
</dbReference>
<dbReference type="InterPro" id="IPR010087">
    <property type="entry name" value="Flav_short"/>
</dbReference>
<dbReference type="InterPro" id="IPR001094">
    <property type="entry name" value="Flavdoxin-like"/>
</dbReference>
<dbReference type="InterPro" id="IPR050619">
    <property type="entry name" value="Flavodoxin"/>
</dbReference>
<dbReference type="InterPro" id="IPR008254">
    <property type="entry name" value="Flavodoxin/NO_synth"/>
</dbReference>
<dbReference type="InterPro" id="IPR001226">
    <property type="entry name" value="Flavodoxin_CS"/>
</dbReference>
<dbReference type="InterPro" id="IPR029039">
    <property type="entry name" value="Flavoprotein-like_sf"/>
</dbReference>
<dbReference type="NCBIfam" id="TIGR01753">
    <property type="entry name" value="flav_short"/>
    <property type="match status" value="1"/>
</dbReference>
<dbReference type="PANTHER" id="PTHR42809:SF1">
    <property type="entry name" value="FLAVODOXIN 1"/>
    <property type="match status" value="1"/>
</dbReference>
<dbReference type="PANTHER" id="PTHR42809">
    <property type="entry name" value="FLAVODOXIN 2"/>
    <property type="match status" value="1"/>
</dbReference>
<dbReference type="Pfam" id="PF00258">
    <property type="entry name" value="Flavodoxin_1"/>
    <property type="match status" value="1"/>
</dbReference>
<dbReference type="PRINTS" id="PR00369">
    <property type="entry name" value="FLAVODOXIN"/>
</dbReference>
<dbReference type="SUPFAM" id="SSF52218">
    <property type="entry name" value="Flavoproteins"/>
    <property type="match status" value="1"/>
</dbReference>
<dbReference type="PROSITE" id="PS00201">
    <property type="entry name" value="FLAVODOXIN"/>
    <property type="match status" value="1"/>
</dbReference>
<dbReference type="PROSITE" id="PS50902">
    <property type="entry name" value="FLAVODOXIN_LIKE"/>
    <property type="match status" value="1"/>
</dbReference>
<comment type="function">
    <text>Low-potential electron donor to a number of redox enzymes.</text>
</comment>
<comment type="cofactor">
    <cofactor>
        <name>FMN</name>
        <dbReference type="ChEBI" id="CHEBI:58210"/>
    </cofactor>
</comment>
<comment type="similarity">
    <text evidence="2">Belongs to the flavodoxin family.</text>
</comment>
<feature type="chain" id="PRO_0000171620" description="Flavodoxin">
    <location>
        <begin position="1"/>
        <end position="148"/>
    </location>
</feature>
<feature type="domain" description="Flavodoxin-like" evidence="1">
    <location>
        <begin position="4"/>
        <end position="145"/>
    </location>
</feature>
<feature type="sequence conflict" description="In Ref. 2." evidence="2" ref="2">
    <original>D</original>
    <variation>N</variation>
    <location>
        <position position="28"/>
    </location>
</feature>
<feature type="strand" evidence="3">
    <location>
        <begin position="3"/>
        <end position="9"/>
    </location>
</feature>
<feature type="strand" evidence="3">
    <location>
        <begin position="11"/>
        <end position="13"/>
    </location>
</feature>
<feature type="helix" evidence="3">
    <location>
        <begin position="14"/>
        <end position="28"/>
    </location>
</feature>
<feature type="strand" evidence="3">
    <location>
        <begin position="32"/>
        <end position="37"/>
    </location>
</feature>
<feature type="helix" evidence="3">
    <location>
        <begin position="38"/>
        <end position="40"/>
    </location>
</feature>
<feature type="turn" evidence="3">
    <location>
        <begin position="44"/>
        <end position="49"/>
    </location>
</feature>
<feature type="strand" evidence="3">
    <location>
        <begin position="51"/>
        <end position="57"/>
    </location>
</feature>
<feature type="strand" evidence="3">
    <location>
        <begin position="62"/>
        <end position="64"/>
    </location>
</feature>
<feature type="turn" evidence="3">
    <location>
        <begin position="69"/>
        <end position="71"/>
    </location>
</feature>
<feature type="helix" evidence="3">
    <location>
        <begin position="72"/>
        <end position="76"/>
    </location>
</feature>
<feature type="helix" evidence="3">
    <location>
        <begin position="78"/>
        <end position="80"/>
    </location>
</feature>
<feature type="strand" evidence="3">
    <location>
        <begin position="87"/>
        <end position="94"/>
    </location>
</feature>
<feature type="strand" evidence="3">
    <location>
        <begin position="98"/>
        <end position="100"/>
    </location>
</feature>
<feature type="helix" evidence="3">
    <location>
        <begin position="103"/>
        <end position="114"/>
    </location>
</feature>
<feature type="strand" evidence="3">
    <location>
        <begin position="124"/>
        <end position="128"/>
    </location>
</feature>
<feature type="helix" evidence="3">
    <location>
        <begin position="130"/>
        <end position="133"/>
    </location>
</feature>
<feature type="helix" evidence="3">
    <location>
        <begin position="134"/>
        <end position="146"/>
    </location>
</feature>
<protein>
    <recommendedName>
        <fullName>Flavodoxin</fullName>
    </recommendedName>
</protein>
<reference key="1">
    <citation type="journal article" date="1988" name="J. Biol. Chem.">
        <title>Cloning, nucleotide sequence, and expression of the flavodoxin gene from Desulfovibrio vulgaris (Hildenborough).</title>
        <authorList>
            <person name="Krey G.D."/>
            <person name="Vanin E.F."/>
            <person name="Swenson R.P."/>
        </authorList>
    </citation>
    <scope>NUCLEOTIDE SEQUENCE [GENOMIC DNA]</scope>
</reference>
<reference key="2">
    <citation type="journal article" date="1988" name="FEMS Microbiol. Lett.">
        <title>Cloning and sequencing of the gene encoding flavodoxin from Desulfovibrio vulgaris Hildenborough.</title>
        <authorList>
            <person name="Curley G.P."/>
            <person name="Voordouw G."/>
        </authorList>
    </citation>
    <scope>NUCLEOTIDE SEQUENCE [GENOMIC DNA]</scope>
</reference>
<reference key="3">
    <citation type="journal article" date="1977" name="J. Biol. Chem.">
        <title>Amino acid sequence of Desulfovibrio vulgaris flavodoxin.</title>
        <authorList>
            <person name="Dubourdieu M."/>
            <person name="Fox J.L."/>
        </authorList>
    </citation>
    <scope>PROTEIN SEQUENCE</scope>
</reference>
<reference key="4">
    <citation type="journal article" date="2004" name="Nat. Biotechnol.">
        <title>The genome sequence of the anaerobic, sulfate-reducing bacterium Desulfovibrio vulgaris Hildenborough.</title>
        <authorList>
            <person name="Heidelberg J.F."/>
            <person name="Seshadri R."/>
            <person name="Haveman S.A."/>
            <person name="Hemme C.L."/>
            <person name="Paulsen I.T."/>
            <person name="Kolonay J.F."/>
            <person name="Eisen J.A."/>
            <person name="Ward N.L."/>
            <person name="Methe B.A."/>
            <person name="Brinkac L.M."/>
            <person name="Daugherty S.C."/>
            <person name="DeBoy R.T."/>
            <person name="Dodson R.J."/>
            <person name="Durkin A.S."/>
            <person name="Madupu R."/>
            <person name="Nelson W.C."/>
            <person name="Sullivan S.A."/>
            <person name="Fouts D.E."/>
            <person name="Haft D.H."/>
            <person name="Selengut J."/>
            <person name="Peterson J.D."/>
            <person name="Davidsen T.M."/>
            <person name="Zafar N."/>
            <person name="Zhou L."/>
            <person name="Radune D."/>
            <person name="Dimitrov G."/>
            <person name="Hance M."/>
            <person name="Tran K."/>
            <person name="Khouri H.M."/>
            <person name="Gill J."/>
            <person name="Utterback T.R."/>
            <person name="Feldblyum T.V."/>
            <person name="Wall J.D."/>
            <person name="Voordouw G."/>
            <person name="Fraser C.M."/>
        </authorList>
    </citation>
    <scope>NUCLEOTIDE SEQUENCE [LARGE SCALE GENOMIC DNA]</scope>
    <source>
        <strain>ATCC 29579 / DSM 644 / CCUG 34227 / NCIMB 8303 / VKM B-1760 / Hildenborough</strain>
    </source>
</reference>
<reference key="5">
    <citation type="journal article" date="1991" name="J. Mol. Biol.">
        <title>Comparison of the crystal structures of a flavodoxin in its three oxidation states at cryogenic temperatures.</title>
        <authorList>
            <person name="Warr W."/>
            <person name="Tulinsky A."/>
            <person name="Swenson R.P."/>
            <person name="Watenpaugh K.D."/>
        </authorList>
    </citation>
    <scope>X-RAY CRYSTALLOGRAPHY (2.0 ANGSTROMS)</scope>
</reference>
<reference key="6">
    <citation type="journal article" date="1973" name="Proc. Natl. Acad. Sci. U.S.A.">
        <title>The binding of riboflavin-5'-phosphate in a flavoprotein: flavodoxin at 2.0-A resolution.</title>
        <authorList>
            <person name="Watenpaugh K.D."/>
            <person name="Sieker L.C."/>
            <person name="Jensen L.H."/>
        </authorList>
    </citation>
    <scope>X-RAY CRYSTALLOGRAPHY (2.0 ANGSTROMS)</scope>
</reference>
<reference key="7">
    <citation type="journal article" date="1972" name="Proc. Natl. Acad. Sci. U.S.A.">
        <title>Structure of the oxidized form of a flavodoxin at 2.5-A resolution: resolution of the phase ambiguity by anomalous scattering.</title>
        <authorList>
            <person name="Watenpaugh K.D."/>
            <person name="Sieker L.C."/>
            <person name="Jensen L.H."/>
            <person name="Legall J."/>
            <person name="Dubourdieu M."/>
        </authorList>
    </citation>
    <scope>X-RAY CRYSTALLOGRAPHY (2.5 ANGSTROMS)</scope>
</reference>
<reference key="8">
    <citation type="journal article" date="1998" name="Eur. J. Biochem.">
        <title>X-ray crystal structure of the Desulfovibrio vulgaris (Hildenborough) apoflavodoxin-riboflavin complex.</title>
        <authorList>
            <person name="Walsh M.A."/>
            <person name="McCarthy A."/>
            <person name="O'Farrell P.A."/>
            <person name="McArdle P."/>
            <person name="Cunningham P.D."/>
            <person name="Mayhew S.G."/>
            <person name="Higgins T.M."/>
        </authorList>
    </citation>
    <scope>X-RAY CRYSTALLOGRAPHY (1.8 ANGSTROMS)</scope>
</reference>
<reference key="9">
    <citation type="journal article" date="1993" name="Eur. J. Biochem.">
        <title>Homonuclear and heteronuclear NMR studies of oxidized Desulfovibrio vulgaris flavodoxin. Sequential assignments and identification of secondary structure elements.</title>
        <authorList>
            <person name="Knauf M.A."/>
            <person name="Loehr F."/>
            <person name="Curley G.P."/>
            <person name="O'Farrell P."/>
            <person name="Mayhew S.G."/>
            <person name="Mueller F."/>
            <person name="Rueterjans H."/>
        </authorList>
    </citation>
    <scope>STRUCTURE BY NMR</scope>
</reference>
<reference key="10">
    <citation type="journal article" date="1996" name="Eur. J. Biochem.">
        <title>NMR investigation of the solution conformation of oxidized flavodoxin from Desulfovibrio vulgaris. Determination of the tertiary structure and detection of protein-bound water molecules.</title>
        <authorList>
            <person name="Knauf M.A."/>
            <person name="Loehr F."/>
            <person name="Bluemel M."/>
            <person name="Mayhew S.G."/>
            <person name="Rueterjans H."/>
        </authorList>
    </citation>
    <scope>STRUCTURE BY NMR</scope>
</reference>
<reference key="11">
    <citation type="journal article" date="1993" name="J. Biomol. NMR">
        <title>1H and 15N resonance assignments and solution secondary structure of oxidized Desulfovibrio vulgaris flavodoxin determined by heteronuclear three-dimensional NMR spectroscopy.</title>
        <authorList>
            <person name="Stockman B.J."/>
            <person name="Euvrard A."/>
            <person name="Kloosterman D.A."/>
            <person name="Scahill T.A."/>
            <person name="Swenson R.P."/>
        </authorList>
    </citation>
    <scope>STRUCTURE BY NMR</scope>
</reference>